<name>NUOB_DEHM1</name>
<organism>
    <name type="scientific">Dehalococcoides mccartyi (strain ATCC BAA-2266 / KCTC 15142 / 195)</name>
    <name type="common">Dehalococcoides ethenogenes (strain 195)</name>
    <dbReference type="NCBI Taxonomy" id="243164"/>
    <lineage>
        <taxon>Bacteria</taxon>
        <taxon>Bacillati</taxon>
        <taxon>Chloroflexota</taxon>
        <taxon>Dehalococcoidia</taxon>
        <taxon>Dehalococcoidales</taxon>
        <taxon>Dehalococcoidaceae</taxon>
        <taxon>Dehalococcoides</taxon>
    </lineage>
</organism>
<dbReference type="EC" id="7.1.1.-" evidence="1"/>
<dbReference type="EMBL" id="CP000027">
    <property type="protein sequence ID" value="AAW39811.1"/>
    <property type="molecule type" value="Genomic_DNA"/>
</dbReference>
<dbReference type="RefSeq" id="WP_010936628.1">
    <property type="nucleotide sequence ID" value="NC_002936.3"/>
</dbReference>
<dbReference type="SMR" id="Q3Z800"/>
<dbReference type="STRING" id="243164.DET0924"/>
<dbReference type="GeneID" id="3229773"/>
<dbReference type="KEGG" id="det:DET0924"/>
<dbReference type="eggNOG" id="COG0377">
    <property type="taxonomic scope" value="Bacteria"/>
</dbReference>
<dbReference type="HOGENOM" id="CLU_055737_7_3_0"/>
<dbReference type="InParanoid" id="Q3Z800"/>
<dbReference type="Proteomes" id="UP000008289">
    <property type="component" value="Chromosome"/>
</dbReference>
<dbReference type="GO" id="GO:0005886">
    <property type="term" value="C:plasma membrane"/>
    <property type="evidence" value="ECO:0007669"/>
    <property type="project" value="UniProtKB-SubCell"/>
</dbReference>
<dbReference type="GO" id="GO:0045271">
    <property type="term" value="C:respiratory chain complex I"/>
    <property type="evidence" value="ECO:0007669"/>
    <property type="project" value="TreeGrafter"/>
</dbReference>
<dbReference type="GO" id="GO:0051539">
    <property type="term" value="F:4 iron, 4 sulfur cluster binding"/>
    <property type="evidence" value="ECO:0007669"/>
    <property type="project" value="UniProtKB-KW"/>
</dbReference>
<dbReference type="GO" id="GO:0005506">
    <property type="term" value="F:iron ion binding"/>
    <property type="evidence" value="ECO:0007669"/>
    <property type="project" value="UniProtKB-UniRule"/>
</dbReference>
<dbReference type="GO" id="GO:0008137">
    <property type="term" value="F:NADH dehydrogenase (ubiquinone) activity"/>
    <property type="evidence" value="ECO:0007669"/>
    <property type="project" value="InterPro"/>
</dbReference>
<dbReference type="GO" id="GO:0050136">
    <property type="term" value="F:NADH:ubiquinone reductase (non-electrogenic) activity"/>
    <property type="evidence" value="ECO:0007669"/>
    <property type="project" value="UniProtKB-UniRule"/>
</dbReference>
<dbReference type="GO" id="GO:0048038">
    <property type="term" value="F:quinone binding"/>
    <property type="evidence" value="ECO:0007669"/>
    <property type="project" value="UniProtKB-KW"/>
</dbReference>
<dbReference type="GO" id="GO:0009060">
    <property type="term" value="P:aerobic respiration"/>
    <property type="evidence" value="ECO:0007669"/>
    <property type="project" value="TreeGrafter"/>
</dbReference>
<dbReference type="GO" id="GO:0015990">
    <property type="term" value="P:electron transport coupled proton transport"/>
    <property type="evidence" value="ECO:0007669"/>
    <property type="project" value="TreeGrafter"/>
</dbReference>
<dbReference type="FunFam" id="3.40.50.12280:FF:000002">
    <property type="entry name" value="NADH-quinone oxidoreductase subunit B"/>
    <property type="match status" value="1"/>
</dbReference>
<dbReference type="Gene3D" id="3.40.50.12280">
    <property type="match status" value="1"/>
</dbReference>
<dbReference type="HAMAP" id="MF_01356">
    <property type="entry name" value="NDH1_NuoB"/>
    <property type="match status" value="1"/>
</dbReference>
<dbReference type="InterPro" id="IPR006137">
    <property type="entry name" value="NADH_UbQ_OxRdtase-like_20kDa"/>
</dbReference>
<dbReference type="InterPro" id="IPR006138">
    <property type="entry name" value="NADH_UQ_OxRdtase_20Kd_su"/>
</dbReference>
<dbReference type="NCBIfam" id="TIGR01957">
    <property type="entry name" value="nuoB_fam"/>
    <property type="match status" value="1"/>
</dbReference>
<dbReference type="NCBIfam" id="NF005012">
    <property type="entry name" value="PRK06411.1"/>
    <property type="match status" value="1"/>
</dbReference>
<dbReference type="PANTHER" id="PTHR11995">
    <property type="entry name" value="NADH DEHYDROGENASE"/>
    <property type="match status" value="1"/>
</dbReference>
<dbReference type="PANTHER" id="PTHR11995:SF14">
    <property type="entry name" value="NADH DEHYDROGENASE [UBIQUINONE] IRON-SULFUR PROTEIN 7, MITOCHONDRIAL"/>
    <property type="match status" value="1"/>
</dbReference>
<dbReference type="Pfam" id="PF01058">
    <property type="entry name" value="Oxidored_q6"/>
    <property type="match status" value="1"/>
</dbReference>
<dbReference type="SUPFAM" id="SSF56770">
    <property type="entry name" value="HydA/Nqo6-like"/>
    <property type="match status" value="1"/>
</dbReference>
<proteinExistence type="inferred from homology"/>
<accession>Q3Z800</accession>
<gene>
    <name evidence="1" type="primary">nuoB</name>
    <name type="ordered locus">DET0924</name>
</gene>
<feature type="chain" id="PRO_0000376191" description="NADH-quinone oxidoreductase subunit B">
    <location>
        <begin position="1"/>
        <end position="200"/>
    </location>
</feature>
<feature type="binding site" evidence="1">
    <location>
        <position position="78"/>
    </location>
    <ligand>
        <name>[4Fe-4S] cluster</name>
        <dbReference type="ChEBI" id="CHEBI:49883"/>
    </ligand>
</feature>
<feature type="binding site" evidence="1">
    <location>
        <position position="79"/>
    </location>
    <ligand>
        <name>[4Fe-4S] cluster</name>
        <dbReference type="ChEBI" id="CHEBI:49883"/>
    </ligand>
</feature>
<feature type="binding site" evidence="1">
    <location>
        <position position="144"/>
    </location>
    <ligand>
        <name>[4Fe-4S] cluster</name>
        <dbReference type="ChEBI" id="CHEBI:49883"/>
    </ligand>
</feature>
<feature type="binding site" evidence="1">
    <location>
        <position position="174"/>
    </location>
    <ligand>
        <name>[4Fe-4S] cluster</name>
        <dbReference type="ChEBI" id="CHEBI:49883"/>
    </ligand>
</feature>
<keyword id="KW-0004">4Fe-4S</keyword>
<keyword id="KW-1003">Cell membrane</keyword>
<keyword id="KW-0408">Iron</keyword>
<keyword id="KW-0411">Iron-sulfur</keyword>
<keyword id="KW-0472">Membrane</keyword>
<keyword id="KW-0479">Metal-binding</keyword>
<keyword id="KW-0520">NAD</keyword>
<keyword id="KW-0874">Quinone</keyword>
<keyword id="KW-1278">Translocase</keyword>
<keyword id="KW-0813">Transport</keyword>
<keyword id="KW-0830">Ubiquinone</keyword>
<evidence type="ECO:0000255" key="1">
    <source>
        <dbReference type="HAMAP-Rule" id="MF_01356"/>
    </source>
</evidence>
<protein>
    <recommendedName>
        <fullName evidence="1">NADH-quinone oxidoreductase subunit B</fullName>
        <ecNumber evidence="1">7.1.1.-</ecNumber>
    </recommendedName>
    <alternativeName>
        <fullName evidence="1">NADH dehydrogenase I subunit B</fullName>
    </alternativeName>
    <alternativeName>
        <fullName evidence="1">NDH-1 subunit B</fullName>
    </alternativeName>
</protein>
<reference key="1">
    <citation type="journal article" date="2005" name="Science">
        <title>Genome sequence of the PCE-dechlorinating bacterium Dehalococcoides ethenogenes.</title>
        <authorList>
            <person name="Seshadri R."/>
            <person name="Adrian L."/>
            <person name="Fouts D.E."/>
            <person name="Eisen J.A."/>
            <person name="Phillippy A.M."/>
            <person name="Methe B.A."/>
            <person name="Ward N.L."/>
            <person name="Nelson W.C."/>
            <person name="DeBoy R.T."/>
            <person name="Khouri H.M."/>
            <person name="Kolonay J.F."/>
            <person name="Dodson R.J."/>
            <person name="Daugherty S.C."/>
            <person name="Brinkac L.M."/>
            <person name="Sullivan S.A."/>
            <person name="Madupu R."/>
            <person name="Nelson K.E."/>
            <person name="Kang K.H."/>
            <person name="Impraim M."/>
            <person name="Tran K."/>
            <person name="Robinson J.M."/>
            <person name="Forberger H.A."/>
            <person name="Fraser C.M."/>
            <person name="Zinder S.H."/>
            <person name="Heidelberg J.F."/>
        </authorList>
    </citation>
    <scope>NUCLEOTIDE SEQUENCE [LARGE SCALE GENOMIC DNA]</scope>
    <source>
        <strain>ATCC BAA-2266 / KCTC 15142 / 195</strain>
    </source>
</reference>
<comment type="function">
    <text evidence="1">NDH-1 shuttles electrons from NADH, via FMN and iron-sulfur (Fe-S) centers, to quinones in the respiratory chain. The immediate electron acceptor for the enzyme in this species is believed to be ubiquinone. Couples the redox reaction to proton translocation (for every two electrons transferred, four hydrogen ions are translocated across the cytoplasmic membrane), and thus conserves the redox energy in a proton gradient.</text>
</comment>
<comment type="catalytic activity">
    <reaction evidence="1">
        <text>a quinone + NADH + 5 H(+)(in) = a quinol + NAD(+) + 4 H(+)(out)</text>
        <dbReference type="Rhea" id="RHEA:57888"/>
        <dbReference type="ChEBI" id="CHEBI:15378"/>
        <dbReference type="ChEBI" id="CHEBI:24646"/>
        <dbReference type="ChEBI" id="CHEBI:57540"/>
        <dbReference type="ChEBI" id="CHEBI:57945"/>
        <dbReference type="ChEBI" id="CHEBI:132124"/>
    </reaction>
</comment>
<comment type="cofactor">
    <cofactor evidence="1">
        <name>[4Fe-4S] cluster</name>
        <dbReference type="ChEBI" id="CHEBI:49883"/>
    </cofactor>
    <text evidence="1">Binds 1 [4Fe-4S] cluster.</text>
</comment>
<comment type="subunit">
    <text evidence="1">NDH-1 is composed of 14 different subunits. Subunits NuoB, C, D, E, F, and G constitute the peripheral sector of the complex.</text>
</comment>
<comment type="subcellular location">
    <subcellularLocation>
        <location evidence="1">Cell membrane</location>
        <topology evidence="1">Peripheral membrane protein</topology>
        <orientation evidence="1">Cytoplasmic side</orientation>
    </subcellularLocation>
</comment>
<comment type="similarity">
    <text evidence="1">Belongs to the complex I 20 kDa subunit family.</text>
</comment>
<sequence>MELDSGKPLSLLTLDEIDQHEGGIIQSFRTGHTTPYPDPADWLNSEEPPPGVFVTSVEKVLNWSRHYSLWPVMFGLACCAIEMMCMAASRWDLARFGMDIFRASPRQADLMIVAGTLTWKMAPWLKRIYDQMPEPKWVLAMGACGTSGGLFRDSYSVVPGFNMVVPVDVYVPGCPPRPEALLRAIMDIHEKIDKTRIIKR</sequence>